<name>LDH_LATSK</name>
<gene>
    <name evidence="1" type="primary">ldh</name>
    <name type="synonym">ldhL</name>
</gene>
<reference key="1">
    <citation type="submission" date="1995-06" db="EMBL/GenBank/DDBJ databases">
        <title>Cloning and sequencing of the L-ldh gene from Lactobacillus sake 0-1.</title>
        <authorList>
            <person name="van den Berg D.J.C."/>
            <person name="Verbiest A."/>
            <person name="Costello M."/>
            <person name="Ledeboer A.M."/>
            <person name="Verrips C."/>
        </authorList>
    </citation>
    <scope>NUCLEOTIDE SEQUENCE [GENOMIC DNA]</scope>
    <source>
        <strain>CBS 532.92 / 0-1</strain>
    </source>
</reference>
<reference key="2">
    <citation type="journal article" date="1998" name="Microbiology">
        <title>Disruption of the sole ldhL gene in Lactobacillus sakei prevents the production of both L- and D-lactate.</title>
        <authorList>
            <person name="Malleret C."/>
            <person name="Lauret R."/>
            <person name="Ehrlich S.D."/>
            <person name="Morel-Deville F."/>
            <person name="Zagorec M."/>
        </authorList>
    </citation>
    <scope>NUCLEOTIDE SEQUENCE [GENOMIC DNA]</scope>
    <source>
        <strain>207</strain>
    </source>
</reference>
<sequence length="325" mass="35501">MANIEKDHQKVILVGDGAVGSYYAYALTLQGIAQEVGIVDIFKEKTQGDAIDLSDALAFTSPKKIYAAEYSDAKDADVVVITAGAPQKPGETRLDLVSKNLKILKTIVDPIVESGFNGIFLVAANPVDILTYATWKLSGFPKERVIGSGTSLDSARFRKDIAEMVNVDARSVHAYIMGEHGDTEFPVWSHANIGGIKISEWVKAHPEVKEEELVKIFESVRDAAYTIINLKGATFYGIGTALARITKAILDDENAVLPLSVFMDGQYGLNDIFIGSPAVINRSGITNILEIPLTDHEMESMHKSAKQLKDIVTKAFEELDIETRQ</sequence>
<proteinExistence type="inferred from homology"/>
<protein>
    <recommendedName>
        <fullName evidence="1">L-lactate dehydrogenase</fullName>
        <shortName evidence="1">L-LDH</shortName>
        <ecNumber evidence="1">1.1.1.27</ecNumber>
    </recommendedName>
</protein>
<feature type="chain" id="PRO_0000168360" description="L-lactate dehydrogenase">
    <location>
        <begin position="1"/>
        <end position="325"/>
    </location>
</feature>
<feature type="active site" description="Proton acceptor" evidence="1">
    <location>
        <position position="180"/>
    </location>
</feature>
<feature type="binding site" evidence="1">
    <location>
        <position position="19"/>
    </location>
    <ligand>
        <name>NAD(+)</name>
        <dbReference type="ChEBI" id="CHEBI:57540"/>
    </ligand>
</feature>
<feature type="binding site" evidence="1">
    <location>
        <position position="40"/>
    </location>
    <ligand>
        <name>NAD(+)</name>
        <dbReference type="ChEBI" id="CHEBI:57540"/>
    </ligand>
</feature>
<feature type="binding site" evidence="1">
    <location>
        <position position="45"/>
    </location>
    <ligand>
        <name>NAD(+)</name>
        <dbReference type="ChEBI" id="CHEBI:57540"/>
    </ligand>
</feature>
<feature type="binding site" evidence="1">
    <location>
        <position position="70"/>
    </location>
    <ligand>
        <name>NAD(+)</name>
        <dbReference type="ChEBI" id="CHEBI:57540"/>
    </ligand>
</feature>
<feature type="binding site" evidence="1">
    <location>
        <begin position="84"/>
        <end position="85"/>
    </location>
    <ligand>
        <name>NAD(+)</name>
        <dbReference type="ChEBI" id="CHEBI:57540"/>
    </ligand>
</feature>
<feature type="binding site" evidence="1">
    <location>
        <position position="87"/>
    </location>
    <ligand>
        <name>substrate</name>
    </ligand>
</feature>
<feature type="binding site" evidence="1">
    <location>
        <position position="93"/>
    </location>
    <ligand>
        <name>substrate</name>
    </ligand>
</feature>
<feature type="binding site" evidence="1">
    <location>
        <position position="106"/>
    </location>
    <ligand>
        <name>NAD(+)</name>
        <dbReference type="ChEBI" id="CHEBI:57540"/>
    </ligand>
</feature>
<feature type="binding site" evidence="1">
    <location>
        <begin position="123"/>
        <end position="125"/>
    </location>
    <ligand>
        <name>NAD(+)</name>
        <dbReference type="ChEBI" id="CHEBI:57540"/>
    </ligand>
</feature>
<feature type="binding site" evidence="1">
    <location>
        <begin position="125"/>
        <end position="128"/>
    </location>
    <ligand>
        <name>substrate</name>
    </ligand>
</feature>
<feature type="binding site" evidence="1">
    <location>
        <position position="148"/>
    </location>
    <ligand>
        <name>NAD(+)</name>
        <dbReference type="ChEBI" id="CHEBI:57540"/>
    </ligand>
</feature>
<feature type="binding site" evidence="1">
    <location>
        <begin position="153"/>
        <end position="156"/>
    </location>
    <ligand>
        <name>substrate</name>
    </ligand>
</feature>
<feature type="binding site" evidence="1">
    <location>
        <position position="158"/>
    </location>
    <ligand>
        <name>beta-D-fructose 1,6-bisphosphate</name>
        <dbReference type="ChEBI" id="CHEBI:32966"/>
        <note>allosteric activator</note>
    </ligand>
</feature>
<feature type="binding site" evidence="1">
    <location>
        <position position="173"/>
    </location>
    <ligand>
        <name>beta-D-fructose 1,6-bisphosphate</name>
        <dbReference type="ChEBI" id="CHEBI:32966"/>
        <note>allosteric activator</note>
    </ligand>
</feature>
<feature type="binding site" evidence="1">
    <location>
        <position position="234"/>
    </location>
    <ligand>
        <name>substrate</name>
    </ligand>
</feature>
<feature type="modified residue" description="Phosphotyrosine" evidence="1">
    <location>
        <position position="225"/>
    </location>
</feature>
<accession>P50934</accession>
<comment type="function">
    <text evidence="1">Catalyzes the conversion of lactate to pyruvate.</text>
</comment>
<comment type="catalytic activity">
    <reaction evidence="1">
        <text>(S)-lactate + NAD(+) = pyruvate + NADH + H(+)</text>
        <dbReference type="Rhea" id="RHEA:23444"/>
        <dbReference type="ChEBI" id="CHEBI:15361"/>
        <dbReference type="ChEBI" id="CHEBI:15378"/>
        <dbReference type="ChEBI" id="CHEBI:16651"/>
        <dbReference type="ChEBI" id="CHEBI:57540"/>
        <dbReference type="ChEBI" id="CHEBI:57945"/>
        <dbReference type="EC" id="1.1.1.27"/>
    </reaction>
</comment>
<comment type="activity regulation">
    <text evidence="1">Allosterically activated by fructose 1,6-bisphosphate (FBP).</text>
</comment>
<comment type="pathway">
    <text evidence="1">Fermentation; pyruvate fermentation to lactate; (S)-lactate from pyruvate: step 1/1.</text>
</comment>
<comment type="subunit">
    <text evidence="1">Homotetramer.</text>
</comment>
<comment type="subcellular location">
    <subcellularLocation>
        <location evidence="1">Cytoplasm</location>
    </subcellularLocation>
</comment>
<comment type="similarity">
    <text evidence="1 2">Belongs to the LDH/MDH superfamily. LDH family.</text>
</comment>
<dbReference type="EC" id="1.1.1.27" evidence="1"/>
<dbReference type="EMBL" id="U26688">
    <property type="protein sequence ID" value="AAA67994.1"/>
    <property type="molecule type" value="Genomic_DNA"/>
</dbReference>
<dbReference type="EMBL" id="AF054624">
    <property type="protein sequence ID" value="AAD03812.1"/>
    <property type="molecule type" value="Genomic_DNA"/>
</dbReference>
<dbReference type="SMR" id="P50934"/>
<dbReference type="UniPathway" id="UPA00554">
    <property type="reaction ID" value="UER00611"/>
</dbReference>
<dbReference type="GO" id="GO:0005737">
    <property type="term" value="C:cytoplasm"/>
    <property type="evidence" value="ECO:0007669"/>
    <property type="project" value="UniProtKB-SubCell"/>
</dbReference>
<dbReference type="GO" id="GO:0004459">
    <property type="term" value="F:L-lactate dehydrogenase activity"/>
    <property type="evidence" value="ECO:0007669"/>
    <property type="project" value="UniProtKB-UniRule"/>
</dbReference>
<dbReference type="GO" id="GO:0006096">
    <property type="term" value="P:glycolytic process"/>
    <property type="evidence" value="ECO:0007669"/>
    <property type="project" value="UniProtKB-UniRule"/>
</dbReference>
<dbReference type="GO" id="GO:0006089">
    <property type="term" value="P:lactate metabolic process"/>
    <property type="evidence" value="ECO:0007669"/>
    <property type="project" value="TreeGrafter"/>
</dbReference>
<dbReference type="CDD" id="cd05291">
    <property type="entry name" value="HicDH_like"/>
    <property type="match status" value="1"/>
</dbReference>
<dbReference type="FunFam" id="3.40.50.720:FF:000018">
    <property type="entry name" value="Malate dehydrogenase"/>
    <property type="match status" value="1"/>
</dbReference>
<dbReference type="Gene3D" id="3.90.110.10">
    <property type="entry name" value="Lactate dehydrogenase/glycoside hydrolase, family 4, C-terminal"/>
    <property type="match status" value="1"/>
</dbReference>
<dbReference type="Gene3D" id="3.40.50.720">
    <property type="entry name" value="NAD(P)-binding Rossmann-like Domain"/>
    <property type="match status" value="1"/>
</dbReference>
<dbReference type="HAMAP" id="MF_00488">
    <property type="entry name" value="Lactate_dehydrog"/>
    <property type="match status" value="1"/>
</dbReference>
<dbReference type="InterPro" id="IPR001557">
    <property type="entry name" value="L-lactate/malate_DH"/>
</dbReference>
<dbReference type="InterPro" id="IPR011304">
    <property type="entry name" value="L-lactate_DH"/>
</dbReference>
<dbReference type="InterPro" id="IPR018177">
    <property type="entry name" value="L-lactate_DH_AS"/>
</dbReference>
<dbReference type="InterPro" id="IPR022383">
    <property type="entry name" value="Lactate/malate_DH_C"/>
</dbReference>
<dbReference type="InterPro" id="IPR001236">
    <property type="entry name" value="Lactate/malate_DH_N"/>
</dbReference>
<dbReference type="InterPro" id="IPR015955">
    <property type="entry name" value="Lactate_DH/Glyco_Ohase_4_C"/>
</dbReference>
<dbReference type="InterPro" id="IPR036291">
    <property type="entry name" value="NAD(P)-bd_dom_sf"/>
</dbReference>
<dbReference type="NCBIfam" id="TIGR01771">
    <property type="entry name" value="L-LDH-NAD"/>
    <property type="match status" value="1"/>
</dbReference>
<dbReference type="NCBIfam" id="NF000824">
    <property type="entry name" value="PRK00066.1"/>
    <property type="match status" value="1"/>
</dbReference>
<dbReference type="NCBIfam" id="NF004863">
    <property type="entry name" value="PRK06223.1"/>
    <property type="match status" value="1"/>
</dbReference>
<dbReference type="PANTHER" id="PTHR43128">
    <property type="entry name" value="L-2-HYDROXYCARBOXYLATE DEHYDROGENASE (NAD(P)(+))"/>
    <property type="match status" value="1"/>
</dbReference>
<dbReference type="PANTHER" id="PTHR43128:SF16">
    <property type="entry name" value="L-LACTATE DEHYDROGENASE"/>
    <property type="match status" value="1"/>
</dbReference>
<dbReference type="Pfam" id="PF02866">
    <property type="entry name" value="Ldh_1_C"/>
    <property type="match status" value="1"/>
</dbReference>
<dbReference type="Pfam" id="PF00056">
    <property type="entry name" value="Ldh_1_N"/>
    <property type="match status" value="1"/>
</dbReference>
<dbReference type="PIRSF" id="PIRSF000102">
    <property type="entry name" value="Lac_mal_DH"/>
    <property type="match status" value="1"/>
</dbReference>
<dbReference type="PRINTS" id="PR00086">
    <property type="entry name" value="LLDHDRGNASE"/>
</dbReference>
<dbReference type="SUPFAM" id="SSF56327">
    <property type="entry name" value="LDH C-terminal domain-like"/>
    <property type="match status" value="1"/>
</dbReference>
<dbReference type="SUPFAM" id="SSF51735">
    <property type="entry name" value="NAD(P)-binding Rossmann-fold domains"/>
    <property type="match status" value="1"/>
</dbReference>
<dbReference type="PROSITE" id="PS00064">
    <property type="entry name" value="L_LDH"/>
    <property type="match status" value="1"/>
</dbReference>
<keyword id="KW-0021">Allosteric enzyme</keyword>
<keyword id="KW-0963">Cytoplasm</keyword>
<keyword id="KW-0520">NAD</keyword>
<keyword id="KW-0560">Oxidoreductase</keyword>
<keyword id="KW-0597">Phosphoprotein</keyword>
<evidence type="ECO:0000255" key="1">
    <source>
        <dbReference type="HAMAP-Rule" id="MF_00488"/>
    </source>
</evidence>
<evidence type="ECO:0000305" key="2"/>
<organism>
    <name type="scientific">Latilactobacillus sakei</name>
    <name type="common">Lactobacillus sakei</name>
    <dbReference type="NCBI Taxonomy" id="1599"/>
    <lineage>
        <taxon>Bacteria</taxon>
        <taxon>Bacillati</taxon>
        <taxon>Bacillota</taxon>
        <taxon>Bacilli</taxon>
        <taxon>Lactobacillales</taxon>
        <taxon>Lactobacillaceae</taxon>
        <taxon>Latilactobacillus</taxon>
    </lineage>
</organism>